<protein>
    <recommendedName>
        <fullName evidence="1">L-fucose isomerase</fullName>
        <ecNumber evidence="1">5.3.1.25</ecNumber>
    </recommendedName>
    <alternativeName>
        <fullName evidence="1">6-deoxy-L-galactose isomerase</fullName>
    </alternativeName>
    <alternativeName>
        <fullName>FucIase</fullName>
    </alternativeName>
</protein>
<evidence type="ECO:0000255" key="1">
    <source>
        <dbReference type="HAMAP-Rule" id="MF_01254"/>
    </source>
</evidence>
<feature type="chain" id="PRO_1000067223" description="L-fucose isomerase">
    <location>
        <begin position="1"/>
        <end position="591"/>
    </location>
</feature>
<feature type="active site" description="Proton acceptor" evidence="1">
    <location>
        <position position="337"/>
    </location>
</feature>
<feature type="active site" description="Proton acceptor" evidence="1">
    <location>
        <position position="361"/>
    </location>
</feature>
<feature type="binding site" evidence="1">
    <location>
        <position position="337"/>
    </location>
    <ligand>
        <name>Mn(2+)</name>
        <dbReference type="ChEBI" id="CHEBI:29035"/>
    </ligand>
</feature>
<feature type="binding site" evidence="1">
    <location>
        <position position="361"/>
    </location>
    <ligand>
        <name>Mn(2+)</name>
        <dbReference type="ChEBI" id="CHEBI:29035"/>
    </ligand>
</feature>
<feature type="binding site" evidence="1">
    <location>
        <position position="528"/>
    </location>
    <ligand>
        <name>Mn(2+)</name>
        <dbReference type="ChEBI" id="CHEBI:29035"/>
    </ligand>
</feature>
<name>FUCI_SALCH</name>
<gene>
    <name evidence="1" type="primary">fucI</name>
    <name type="ordered locus">SCH_2916</name>
</gene>
<sequence length="591" mass="64732">MKKISLPKIGIRPVIDGRRMGVRESLEEQTMNMAKATAALITEKIRHACGAQVECVIADTCIAGMAESAACEEKFSSQNVGVTITVTPCWCYGSETIDMDPMRPKAIWGFNGTERPGAVYLAAALAAHSQKGIPAFSIYGHDVQDADDTSIPADVEEKLLRFARAGLAVASMKGKSYLSVGGVSMGIAGSIVDHNFFESWLGMKVQAVDMTELRRRIDQKIYDEAELEMALAWADKNFCYGEDQNASQYKRNEAQNRAVLKESLLMAMCIRDMMQGNKTLADKGLVEESLGYNAIAAGFQGQRHWTDQYPNGDTAEALLNSSFDWNGVREPFVVATENDSLNGVAMLFGHQLTGTAQIFADVRTYWSPEAVERITGQALSGLAEHGIIHLINSGSAALDGACKQRDSEGKPTMKPHWEISQQEADACLAATEWCPAIHEYFRGGGYSSRFLTEGGVPFTMTRVNIIKGLGPVLQIAEGWSVELPKAMHDQLDARTNSTWPTTWFAPRLTGKGPFTDVYSVMANWGANHGVLTIGHVGADFITLAAMLRIPVCMHNVEEAKIYRPSAWAAHGMDIEGQDYRACQNYGPLYKR</sequence>
<organism>
    <name type="scientific">Salmonella choleraesuis (strain SC-B67)</name>
    <dbReference type="NCBI Taxonomy" id="321314"/>
    <lineage>
        <taxon>Bacteria</taxon>
        <taxon>Pseudomonadati</taxon>
        <taxon>Pseudomonadota</taxon>
        <taxon>Gammaproteobacteria</taxon>
        <taxon>Enterobacterales</taxon>
        <taxon>Enterobacteriaceae</taxon>
        <taxon>Salmonella</taxon>
    </lineage>
</organism>
<dbReference type="EC" id="5.3.1.25" evidence="1"/>
<dbReference type="EMBL" id="AE017220">
    <property type="protein sequence ID" value="AAX66822.1"/>
    <property type="molecule type" value="Genomic_DNA"/>
</dbReference>
<dbReference type="RefSeq" id="WP_001540825.1">
    <property type="nucleotide sequence ID" value="NC_006905.1"/>
</dbReference>
<dbReference type="SMR" id="Q57KE0"/>
<dbReference type="KEGG" id="sec:SCH_2916"/>
<dbReference type="HOGENOM" id="CLU_033326_1_0_6"/>
<dbReference type="UniPathway" id="UPA00563">
    <property type="reaction ID" value="UER00624"/>
</dbReference>
<dbReference type="Proteomes" id="UP000000538">
    <property type="component" value="Chromosome"/>
</dbReference>
<dbReference type="GO" id="GO:0005737">
    <property type="term" value="C:cytoplasm"/>
    <property type="evidence" value="ECO:0007669"/>
    <property type="project" value="UniProtKB-SubCell"/>
</dbReference>
<dbReference type="GO" id="GO:0008790">
    <property type="term" value="F:arabinose isomerase activity"/>
    <property type="evidence" value="ECO:0007669"/>
    <property type="project" value="TreeGrafter"/>
</dbReference>
<dbReference type="GO" id="GO:0008736">
    <property type="term" value="F:L-fucose isomerase activity"/>
    <property type="evidence" value="ECO:0007669"/>
    <property type="project" value="UniProtKB-UniRule"/>
</dbReference>
<dbReference type="GO" id="GO:0030145">
    <property type="term" value="F:manganese ion binding"/>
    <property type="evidence" value="ECO:0007669"/>
    <property type="project" value="UniProtKB-UniRule"/>
</dbReference>
<dbReference type="GO" id="GO:0019571">
    <property type="term" value="P:D-arabinose catabolic process"/>
    <property type="evidence" value="ECO:0007669"/>
    <property type="project" value="TreeGrafter"/>
</dbReference>
<dbReference type="GO" id="GO:0042355">
    <property type="term" value="P:L-fucose catabolic process"/>
    <property type="evidence" value="ECO:0007669"/>
    <property type="project" value="UniProtKB-UniRule"/>
</dbReference>
<dbReference type="FunFam" id="3.20.14.10:FF:000001">
    <property type="entry name" value="L-fucose isomerase"/>
    <property type="match status" value="1"/>
</dbReference>
<dbReference type="FunFam" id="3.40.275.10:FF:000001">
    <property type="entry name" value="L-fucose isomerase"/>
    <property type="match status" value="1"/>
</dbReference>
<dbReference type="FunFam" id="3.40.50.1070:FF:000001">
    <property type="entry name" value="L-fucose isomerase"/>
    <property type="match status" value="1"/>
</dbReference>
<dbReference type="Gene3D" id="3.40.50.1070">
    <property type="match status" value="1"/>
</dbReference>
<dbReference type="Gene3D" id="3.40.275.10">
    <property type="entry name" value="L-fucose Isomerase, Chain A, domain 2"/>
    <property type="match status" value="1"/>
</dbReference>
<dbReference type="Gene3D" id="3.20.14.10">
    <property type="entry name" value="L-fucose/L-arabinose isomerase, C-terminal"/>
    <property type="match status" value="1"/>
</dbReference>
<dbReference type="HAMAP" id="MF_01254">
    <property type="entry name" value="Fucose_iso"/>
    <property type="match status" value="1"/>
</dbReference>
<dbReference type="InterPro" id="IPR004216">
    <property type="entry name" value="Fuc/Ara_isomerase_C"/>
</dbReference>
<dbReference type="InterPro" id="IPR038393">
    <property type="entry name" value="Fuc_iso_dom3_sf"/>
</dbReference>
<dbReference type="InterPro" id="IPR015888">
    <property type="entry name" value="Fuc_isomerase_C"/>
</dbReference>
<dbReference type="InterPro" id="IPR038391">
    <property type="entry name" value="Fucose_iso_dom1_sf"/>
</dbReference>
<dbReference type="InterPro" id="IPR012888">
    <property type="entry name" value="Fucose_iso_N1"/>
</dbReference>
<dbReference type="InterPro" id="IPR005763">
    <property type="entry name" value="Fucose_isomerase"/>
</dbReference>
<dbReference type="InterPro" id="IPR038392">
    <property type="entry name" value="Fucose_isomerase_dom2_sf"/>
</dbReference>
<dbReference type="InterPro" id="IPR009015">
    <property type="entry name" value="Fucose_isomerase_N/cen_sf"/>
</dbReference>
<dbReference type="InterPro" id="IPR012889">
    <property type="entry name" value="Fucose_isomerase_N2"/>
</dbReference>
<dbReference type="NCBIfam" id="TIGR01089">
    <property type="entry name" value="fucI"/>
    <property type="match status" value="1"/>
</dbReference>
<dbReference type="NCBIfam" id="NF008220">
    <property type="entry name" value="PRK10991.1"/>
    <property type="match status" value="1"/>
</dbReference>
<dbReference type="PANTHER" id="PTHR37840">
    <property type="entry name" value="L-FUCOSE ISOMERASE"/>
    <property type="match status" value="1"/>
</dbReference>
<dbReference type="PANTHER" id="PTHR37840:SF1">
    <property type="entry name" value="L-FUCOSE ISOMERASE"/>
    <property type="match status" value="1"/>
</dbReference>
<dbReference type="Pfam" id="PF02952">
    <property type="entry name" value="Fucose_iso_C"/>
    <property type="match status" value="1"/>
</dbReference>
<dbReference type="Pfam" id="PF07881">
    <property type="entry name" value="Fucose_iso_N1"/>
    <property type="match status" value="1"/>
</dbReference>
<dbReference type="Pfam" id="PF07882">
    <property type="entry name" value="Fucose_iso_N2"/>
    <property type="match status" value="1"/>
</dbReference>
<dbReference type="SUPFAM" id="SSF50443">
    <property type="entry name" value="FucI/AraA C-terminal domain-like"/>
    <property type="match status" value="1"/>
</dbReference>
<dbReference type="SUPFAM" id="SSF53743">
    <property type="entry name" value="FucI/AraA N-terminal and middle domains"/>
    <property type="match status" value="1"/>
</dbReference>
<comment type="function">
    <text evidence="1">Converts the aldose L-fucose into the corresponding ketose L-fuculose.</text>
</comment>
<comment type="catalytic activity">
    <reaction evidence="1">
        <text>L-fucose = L-fuculose</text>
        <dbReference type="Rhea" id="RHEA:17233"/>
        <dbReference type="ChEBI" id="CHEBI:2181"/>
        <dbReference type="ChEBI" id="CHEBI:17617"/>
        <dbReference type="EC" id="5.3.1.25"/>
    </reaction>
</comment>
<comment type="cofactor">
    <cofactor evidence="1">
        <name>Mn(2+)</name>
        <dbReference type="ChEBI" id="CHEBI:29035"/>
    </cofactor>
</comment>
<comment type="pathway">
    <text evidence="1">Carbohydrate degradation; L-fucose degradation; L-lactaldehyde and glycerone phosphate from L-fucose: step 1/3.</text>
</comment>
<comment type="subunit">
    <text evidence="1">Homohexamer.</text>
</comment>
<comment type="subcellular location">
    <subcellularLocation>
        <location evidence="1">Cytoplasm</location>
    </subcellularLocation>
</comment>
<comment type="similarity">
    <text evidence="1">Belongs to the L-fucose isomerase family.</text>
</comment>
<accession>Q57KE0</accession>
<reference key="1">
    <citation type="journal article" date="2005" name="Nucleic Acids Res.">
        <title>The genome sequence of Salmonella enterica serovar Choleraesuis, a highly invasive and resistant zoonotic pathogen.</title>
        <authorList>
            <person name="Chiu C.-H."/>
            <person name="Tang P."/>
            <person name="Chu C."/>
            <person name="Hu S."/>
            <person name="Bao Q."/>
            <person name="Yu J."/>
            <person name="Chou Y.-Y."/>
            <person name="Wang H.-S."/>
            <person name="Lee Y.-S."/>
        </authorList>
    </citation>
    <scope>NUCLEOTIDE SEQUENCE [LARGE SCALE GENOMIC DNA]</scope>
    <source>
        <strain>SC-B67</strain>
    </source>
</reference>
<proteinExistence type="inferred from homology"/>
<keyword id="KW-0119">Carbohydrate metabolism</keyword>
<keyword id="KW-0963">Cytoplasm</keyword>
<keyword id="KW-0294">Fucose metabolism</keyword>
<keyword id="KW-0413">Isomerase</keyword>
<keyword id="KW-0464">Manganese</keyword>
<keyword id="KW-0479">Metal-binding</keyword>